<protein>
    <recommendedName>
        <fullName evidence="1">Protein translocase subunit SecA 1</fullName>
        <ecNumber evidence="1">7.4.2.8</ecNumber>
    </recommendedName>
</protein>
<sequence>MPGILDRVLRIGEGKILRKLNKLKDQINSIEDDFVDLSDAELRALTDEYKQRLKDGEELDDLLPEAFATVREAAKRTLGQRHFDVQLMGGAALHFGNIAEMKTGEGKTLTATLPVYLNALTGKGVHVVTVNDYLARRDAETMGRIYRFLGMEVGVISPEMSPAARRKAYQADITYGTNNEFGFDYLRDNMARSLDNCVQRGHHYAIVDEVDSILIDEARTPLIISGPAEQNSRWYVEFAKIAPRLRRDVDYEVDEKKRTVGITEAGVAKVEDWLGIDNLYESVNTPLISFLHNAIKAKELYRRDRDYIVKDGEVLIVDEFTGRILRGRRYNEGMHQAIEAKEKVKIKEENQTLAKITLQNYFRLYEKLAGMTGTAVTEAAEFQQTYNLGVVPIPTNKPMIREDLRDLVYKTEEAKFQAIVEDIAECHERGQPVLVGTTSVEKSELLSKMLKRRGIPHEVLNAKNHAREAAIVARAGKLGAVTVATNMAGRGTDIMLGGNPDFIAAEELQERGLSPLETPEEYEKAWPEALERAKKEVEAEHQKVVELGGLYVLGTERHESRRIDNQLRGRAGRQGDPGKSRFYLSLGDDLMRLFNGERVQMIMNRLNLPDDQPIEHKMVTKAIQSAQGQLEQQNFEIRKNVLKYDEVLNRQRQVIYAERRKVLEGADLREQVRSMIDDVLDSYVRSATAEGDPEDWDLEHLWTAFSQIFPVSFTADQLIEENGGDISVLTPDIISQRVREDAHEVYDRREAEIGEETMREVERQVILQVMDRKWREHLYEMDYLQEGIGLRAMAQRNPLIEYQREGYDMFQEMLEGIKEESIRFLFNVEVRVNQPQESQITAASAAATASAIPLVAPEAEKTEDKAEDAQEAEESAASAEAAESAKDTAQDKDAESVAKKAQAVVPALGKEEKQPEKLQYSGPSEGGGVEKRTEDTGPDYANTPRNAPCPCGSGKKYKKCHGAPKSRV</sequence>
<evidence type="ECO:0000255" key="1">
    <source>
        <dbReference type="HAMAP-Rule" id="MF_01382"/>
    </source>
</evidence>
<evidence type="ECO:0000256" key="2">
    <source>
        <dbReference type="SAM" id="MobiDB-lite"/>
    </source>
</evidence>
<evidence type="ECO:0000305" key="3"/>
<feature type="chain" id="PRO_0000318478" description="Protein translocase subunit SecA 1">
    <location>
        <begin position="1"/>
        <end position="968"/>
    </location>
</feature>
<feature type="region of interest" description="Disordered" evidence="2">
    <location>
        <begin position="858"/>
        <end position="968"/>
    </location>
</feature>
<feature type="compositionally biased region" description="Basic and acidic residues" evidence="2">
    <location>
        <begin position="858"/>
        <end position="868"/>
    </location>
</feature>
<feature type="compositionally biased region" description="Basic and acidic residues" evidence="2">
    <location>
        <begin position="883"/>
        <end position="898"/>
    </location>
</feature>
<feature type="compositionally biased region" description="Basic residues" evidence="2">
    <location>
        <begin position="955"/>
        <end position="968"/>
    </location>
</feature>
<feature type="binding site" evidence="1">
    <location>
        <position position="86"/>
    </location>
    <ligand>
        <name>ATP</name>
        <dbReference type="ChEBI" id="CHEBI:30616"/>
    </ligand>
</feature>
<feature type="binding site" evidence="1">
    <location>
        <begin position="104"/>
        <end position="108"/>
    </location>
    <ligand>
        <name>ATP</name>
        <dbReference type="ChEBI" id="CHEBI:30616"/>
    </ligand>
</feature>
<feature type="binding site" evidence="1">
    <location>
        <position position="493"/>
    </location>
    <ligand>
        <name>ATP</name>
        <dbReference type="ChEBI" id="CHEBI:30616"/>
    </ligand>
</feature>
<feature type="binding site" evidence="1">
    <location>
        <position position="949"/>
    </location>
    <ligand>
        <name>Zn(2+)</name>
        <dbReference type="ChEBI" id="CHEBI:29105"/>
    </ligand>
</feature>
<feature type="binding site" evidence="1">
    <location>
        <position position="951"/>
    </location>
    <ligand>
        <name>Zn(2+)</name>
        <dbReference type="ChEBI" id="CHEBI:29105"/>
    </ligand>
</feature>
<feature type="binding site" evidence="1">
    <location>
        <position position="960"/>
    </location>
    <ligand>
        <name>Zn(2+)</name>
        <dbReference type="ChEBI" id="CHEBI:29105"/>
    </ligand>
</feature>
<feature type="binding site" evidence="1">
    <location>
        <position position="961"/>
    </location>
    <ligand>
        <name>Zn(2+)</name>
        <dbReference type="ChEBI" id="CHEBI:29105"/>
    </ligand>
</feature>
<name>SECA1_THEFY</name>
<proteinExistence type="inferred from homology"/>
<comment type="function">
    <text evidence="1">Part of the Sec protein translocase complex. Interacts with the SecYEG preprotein conducting channel. Has a central role in coupling the hydrolysis of ATP to the transfer of proteins into and across the cell membrane, serving as an ATP-driven molecular motor driving the stepwise translocation of polypeptide chains across the membrane.</text>
</comment>
<comment type="catalytic activity">
    <reaction evidence="1">
        <text>ATP + H2O + cellular proteinSide 1 = ADP + phosphate + cellular proteinSide 2.</text>
        <dbReference type="EC" id="7.4.2.8"/>
    </reaction>
</comment>
<comment type="cofactor">
    <cofactor evidence="1">
        <name>Zn(2+)</name>
        <dbReference type="ChEBI" id="CHEBI:29105"/>
    </cofactor>
    <text evidence="1">May bind 1 zinc ion per subunit.</text>
</comment>
<comment type="subunit">
    <text evidence="1">Monomer and homodimer. Part of the essential Sec protein translocation apparatus which comprises SecA, SecYEG and auxiliary proteins SecDF. Other proteins may also be involved.</text>
</comment>
<comment type="subcellular location">
    <subcellularLocation>
        <location evidence="1">Cell membrane</location>
        <topology evidence="1">Peripheral membrane protein</topology>
        <orientation evidence="1">Cytoplasmic side</orientation>
    </subcellularLocation>
    <subcellularLocation>
        <location evidence="1">Cytoplasm</location>
    </subcellularLocation>
    <text evidence="1">Distribution is 50-50.</text>
</comment>
<comment type="similarity">
    <text evidence="1">Belongs to the SecA family.</text>
</comment>
<comment type="sequence caution" evidence="3">
    <conflict type="erroneous initiation">
        <sequence resource="EMBL-CDS" id="AAZ56523"/>
    </conflict>
    <text>Extended N-terminus.</text>
</comment>
<keyword id="KW-0067">ATP-binding</keyword>
<keyword id="KW-1003">Cell membrane</keyword>
<keyword id="KW-0963">Cytoplasm</keyword>
<keyword id="KW-0472">Membrane</keyword>
<keyword id="KW-0479">Metal-binding</keyword>
<keyword id="KW-0547">Nucleotide-binding</keyword>
<keyword id="KW-0653">Protein transport</keyword>
<keyword id="KW-1278">Translocase</keyword>
<keyword id="KW-0811">Translocation</keyword>
<keyword id="KW-0813">Transport</keyword>
<keyword id="KW-0862">Zinc</keyword>
<gene>
    <name evidence="1" type="primary">secA1</name>
    <name type="ordered locus">Tfu_2490</name>
</gene>
<accession>Q47LZ9</accession>
<organism>
    <name type="scientific">Thermobifida fusca (strain YX)</name>
    <dbReference type="NCBI Taxonomy" id="269800"/>
    <lineage>
        <taxon>Bacteria</taxon>
        <taxon>Bacillati</taxon>
        <taxon>Actinomycetota</taxon>
        <taxon>Actinomycetes</taxon>
        <taxon>Streptosporangiales</taxon>
        <taxon>Nocardiopsidaceae</taxon>
        <taxon>Thermobifida</taxon>
    </lineage>
</organism>
<dbReference type="EC" id="7.4.2.8" evidence="1"/>
<dbReference type="EMBL" id="CP000088">
    <property type="protein sequence ID" value="AAZ56523.1"/>
    <property type="status" value="ALT_INIT"/>
    <property type="molecule type" value="Genomic_DNA"/>
</dbReference>
<dbReference type="SMR" id="Q47LZ9"/>
<dbReference type="STRING" id="269800.Tfu_2490"/>
<dbReference type="KEGG" id="tfu:Tfu_2490"/>
<dbReference type="eggNOG" id="COG0653">
    <property type="taxonomic scope" value="Bacteria"/>
</dbReference>
<dbReference type="HOGENOM" id="CLU_005314_3_0_11"/>
<dbReference type="OrthoDB" id="9805579at2"/>
<dbReference type="GO" id="GO:0031522">
    <property type="term" value="C:cell envelope Sec protein transport complex"/>
    <property type="evidence" value="ECO:0007669"/>
    <property type="project" value="TreeGrafter"/>
</dbReference>
<dbReference type="GO" id="GO:0005829">
    <property type="term" value="C:cytosol"/>
    <property type="evidence" value="ECO:0007669"/>
    <property type="project" value="TreeGrafter"/>
</dbReference>
<dbReference type="GO" id="GO:0005886">
    <property type="term" value="C:plasma membrane"/>
    <property type="evidence" value="ECO:0007669"/>
    <property type="project" value="UniProtKB-SubCell"/>
</dbReference>
<dbReference type="GO" id="GO:0005524">
    <property type="term" value="F:ATP binding"/>
    <property type="evidence" value="ECO:0007669"/>
    <property type="project" value="UniProtKB-UniRule"/>
</dbReference>
<dbReference type="GO" id="GO:0046872">
    <property type="term" value="F:metal ion binding"/>
    <property type="evidence" value="ECO:0007669"/>
    <property type="project" value="UniProtKB-KW"/>
</dbReference>
<dbReference type="GO" id="GO:0008564">
    <property type="term" value="F:protein-exporting ATPase activity"/>
    <property type="evidence" value="ECO:0007669"/>
    <property type="project" value="UniProtKB-EC"/>
</dbReference>
<dbReference type="GO" id="GO:0065002">
    <property type="term" value="P:intracellular protein transmembrane transport"/>
    <property type="evidence" value="ECO:0007669"/>
    <property type="project" value="UniProtKB-UniRule"/>
</dbReference>
<dbReference type="GO" id="GO:0017038">
    <property type="term" value="P:protein import"/>
    <property type="evidence" value="ECO:0007669"/>
    <property type="project" value="InterPro"/>
</dbReference>
<dbReference type="GO" id="GO:0006605">
    <property type="term" value="P:protein targeting"/>
    <property type="evidence" value="ECO:0007669"/>
    <property type="project" value="UniProtKB-UniRule"/>
</dbReference>
<dbReference type="GO" id="GO:0043952">
    <property type="term" value="P:protein transport by the Sec complex"/>
    <property type="evidence" value="ECO:0007669"/>
    <property type="project" value="TreeGrafter"/>
</dbReference>
<dbReference type="CDD" id="cd17928">
    <property type="entry name" value="DEXDc_SecA"/>
    <property type="match status" value="1"/>
</dbReference>
<dbReference type="CDD" id="cd18803">
    <property type="entry name" value="SF2_C_secA"/>
    <property type="match status" value="1"/>
</dbReference>
<dbReference type="FunFam" id="1.10.3060.10:FF:000002">
    <property type="entry name" value="Preprotein translocase subunit SecA"/>
    <property type="match status" value="1"/>
</dbReference>
<dbReference type="FunFam" id="3.40.50.300:FF:000113">
    <property type="entry name" value="Preprotein translocase subunit SecA"/>
    <property type="match status" value="1"/>
</dbReference>
<dbReference type="FunFam" id="3.40.50.300:FF:000334">
    <property type="entry name" value="Protein translocase subunit SecA"/>
    <property type="match status" value="1"/>
</dbReference>
<dbReference type="FunFam" id="3.90.1440.10:FF:000002">
    <property type="entry name" value="Protein translocase subunit SecA"/>
    <property type="match status" value="1"/>
</dbReference>
<dbReference type="Gene3D" id="1.10.3060.10">
    <property type="entry name" value="Helical scaffold and wing domains of SecA"/>
    <property type="match status" value="1"/>
</dbReference>
<dbReference type="Gene3D" id="3.40.50.300">
    <property type="entry name" value="P-loop containing nucleotide triphosphate hydrolases"/>
    <property type="match status" value="2"/>
</dbReference>
<dbReference type="Gene3D" id="3.90.1440.10">
    <property type="entry name" value="SecA, preprotein cross-linking domain"/>
    <property type="match status" value="1"/>
</dbReference>
<dbReference type="HAMAP" id="MF_01382">
    <property type="entry name" value="SecA"/>
    <property type="match status" value="1"/>
</dbReference>
<dbReference type="InterPro" id="IPR014001">
    <property type="entry name" value="Helicase_ATP-bd"/>
</dbReference>
<dbReference type="InterPro" id="IPR001650">
    <property type="entry name" value="Helicase_C-like"/>
</dbReference>
<dbReference type="InterPro" id="IPR027417">
    <property type="entry name" value="P-loop_NTPase"/>
</dbReference>
<dbReference type="InterPro" id="IPR004027">
    <property type="entry name" value="SEC_C_motif"/>
</dbReference>
<dbReference type="InterPro" id="IPR000185">
    <property type="entry name" value="SecA"/>
</dbReference>
<dbReference type="InterPro" id="IPR020937">
    <property type="entry name" value="SecA_CS"/>
</dbReference>
<dbReference type="InterPro" id="IPR011115">
    <property type="entry name" value="SecA_DEAD"/>
</dbReference>
<dbReference type="InterPro" id="IPR014018">
    <property type="entry name" value="SecA_motor_DEAD"/>
</dbReference>
<dbReference type="InterPro" id="IPR011130">
    <property type="entry name" value="SecA_preprotein_X-link_dom"/>
</dbReference>
<dbReference type="InterPro" id="IPR044722">
    <property type="entry name" value="SecA_SF2_C"/>
</dbReference>
<dbReference type="InterPro" id="IPR011116">
    <property type="entry name" value="SecA_Wing/Scaffold"/>
</dbReference>
<dbReference type="InterPro" id="IPR036266">
    <property type="entry name" value="SecA_Wing/Scaffold_sf"/>
</dbReference>
<dbReference type="InterPro" id="IPR036670">
    <property type="entry name" value="SecA_X-link_sf"/>
</dbReference>
<dbReference type="NCBIfam" id="NF009538">
    <property type="entry name" value="PRK12904.1"/>
    <property type="match status" value="1"/>
</dbReference>
<dbReference type="NCBIfam" id="TIGR00963">
    <property type="entry name" value="secA"/>
    <property type="match status" value="1"/>
</dbReference>
<dbReference type="PANTHER" id="PTHR30612:SF0">
    <property type="entry name" value="CHLOROPLAST PROTEIN-TRANSPORTING ATPASE"/>
    <property type="match status" value="1"/>
</dbReference>
<dbReference type="PANTHER" id="PTHR30612">
    <property type="entry name" value="SECA INNER MEMBRANE COMPONENT OF SEC PROTEIN SECRETION SYSTEM"/>
    <property type="match status" value="1"/>
</dbReference>
<dbReference type="Pfam" id="PF21090">
    <property type="entry name" value="P-loop_SecA"/>
    <property type="match status" value="1"/>
</dbReference>
<dbReference type="Pfam" id="PF02810">
    <property type="entry name" value="SEC-C"/>
    <property type="match status" value="1"/>
</dbReference>
<dbReference type="Pfam" id="PF07517">
    <property type="entry name" value="SecA_DEAD"/>
    <property type="match status" value="1"/>
</dbReference>
<dbReference type="Pfam" id="PF01043">
    <property type="entry name" value="SecA_PP_bind"/>
    <property type="match status" value="1"/>
</dbReference>
<dbReference type="Pfam" id="PF07516">
    <property type="entry name" value="SecA_SW"/>
    <property type="match status" value="1"/>
</dbReference>
<dbReference type="PRINTS" id="PR00906">
    <property type="entry name" value="SECA"/>
</dbReference>
<dbReference type="SMART" id="SM00957">
    <property type="entry name" value="SecA_DEAD"/>
    <property type="match status" value="1"/>
</dbReference>
<dbReference type="SMART" id="SM00958">
    <property type="entry name" value="SecA_PP_bind"/>
    <property type="match status" value="1"/>
</dbReference>
<dbReference type="SUPFAM" id="SSF81886">
    <property type="entry name" value="Helical scaffold and wing domains of SecA"/>
    <property type="match status" value="1"/>
</dbReference>
<dbReference type="SUPFAM" id="SSF52540">
    <property type="entry name" value="P-loop containing nucleoside triphosphate hydrolases"/>
    <property type="match status" value="2"/>
</dbReference>
<dbReference type="SUPFAM" id="SSF81767">
    <property type="entry name" value="Pre-protein crosslinking domain of SecA"/>
    <property type="match status" value="1"/>
</dbReference>
<dbReference type="PROSITE" id="PS01312">
    <property type="entry name" value="SECA"/>
    <property type="match status" value="1"/>
</dbReference>
<dbReference type="PROSITE" id="PS51196">
    <property type="entry name" value="SECA_MOTOR_DEAD"/>
    <property type="match status" value="1"/>
</dbReference>
<reference key="1">
    <citation type="journal article" date="2007" name="J. Bacteriol.">
        <title>Genome sequence and analysis of the soil cellulolytic actinomycete Thermobifida fusca YX.</title>
        <authorList>
            <person name="Lykidis A."/>
            <person name="Mavromatis K."/>
            <person name="Ivanova N."/>
            <person name="Anderson I."/>
            <person name="Land M."/>
            <person name="DiBartolo G."/>
            <person name="Martinez M."/>
            <person name="Lapidus A."/>
            <person name="Lucas S."/>
            <person name="Copeland A."/>
            <person name="Richardson P."/>
            <person name="Wilson D.B."/>
            <person name="Kyrpides N."/>
        </authorList>
    </citation>
    <scope>NUCLEOTIDE SEQUENCE [LARGE SCALE GENOMIC DNA]</scope>
    <source>
        <strain>YX</strain>
    </source>
</reference>